<gene>
    <name evidence="1" type="primary">recA</name>
    <name type="ordered locus">SYNPCC7002_A0426</name>
</gene>
<sequence length="348" mass="37244">MSAISNNPDKEKALNLVLNQIERNFGKGAIMRLGDAAQMKVATIPSGALTLDQAMGGGFPRGRIVEIYGPESSGKTTVALHAIAEVQKAGGVAAFIDAEHALDPTYSAALGVDIENLLVAQPDNGESALEIADQLVRSAAVDLIVIDSVAALVPRAEIEGEMGDVQVGLQARLMSKALRKIAGNMGRSGCTVIFLNQLRQKIGISYGNPEVTTGGTALKFYASVRLDIRRIQTLKKGSEGEFGIRAKVKVAKNKVAPPFRIAEFDIIFGKGISRVGCMLDLAEQTGVITRKGAWYSYEGDNIAQGRDNAVKYLEENPDVAAIVTQKVRENLDMSSMGFGDEHHTTEEE</sequence>
<reference key="1">
    <citation type="journal article" date="1990" name="J. Bacteriol.">
        <title>Nucleotide sequence and further characterization of the Synechococcus sp. strain PCC 7002 recA gene: complementation of a cyanobacterial recA mutation by the Escherichia coli recA gene.</title>
        <authorList>
            <person name="Murphy R.C."/>
            <person name="Gasparich G.E."/>
            <person name="Bryant D.A."/>
            <person name="Porter R.D."/>
        </authorList>
    </citation>
    <scope>NUCLEOTIDE SEQUENCE [GENOMIC DNA]</scope>
</reference>
<reference key="2">
    <citation type="submission" date="2008-02" db="EMBL/GenBank/DDBJ databases">
        <title>Complete sequence of Synechococcus sp. PCC 7002.</title>
        <authorList>
            <person name="Li T."/>
            <person name="Zhao J."/>
            <person name="Zhao C."/>
            <person name="Liu Z."/>
            <person name="Zhao F."/>
            <person name="Marquardt J."/>
            <person name="Nomura C.T."/>
            <person name="Persson S."/>
            <person name="Detter J.C."/>
            <person name="Richardson P.M."/>
            <person name="Lanz C."/>
            <person name="Schuster S.C."/>
            <person name="Wang J."/>
            <person name="Li S."/>
            <person name="Huang X."/>
            <person name="Cai T."/>
            <person name="Yu Z."/>
            <person name="Luo J."/>
            <person name="Zhao J."/>
            <person name="Bryant D.A."/>
        </authorList>
    </citation>
    <scope>NUCLEOTIDE SEQUENCE [LARGE SCALE GENOMIC DNA]</scope>
    <source>
        <strain>ATCC 27264 / PCC 7002 / PR-6</strain>
    </source>
</reference>
<reference key="3">
    <citation type="journal article" date="1987" name="J. Bacteriol.">
        <title>Molecular cloning and characterization of the recA gene from the cyanobacterium Synechococcus sp. strain PCC 7002.</title>
        <authorList>
            <person name="Murphy R.C."/>
            <person name="Bryant D.A."/>
            <person name="Porter R.D."/>
            <person name="Tandeau de Marsac N."/>
        </authorList>
    </citation>
    <scope>PRELIMINARY NUCLEOTIDE SEQUENCE [GENOMIC DNA] OF 198-296</scope>
</reference>
<evidence type="ECO:0000255" key="1">
    <source>
        <dbReference type="HAMAP-Rule" id="MF_00268"/>
    </source>
</evidence>
<evidence type="ECO:0000305" key="2"/>
<keyword id="KW-0067">ATP-binding</keyword>
<keyword id="KW-0963">Cytoplasm</keyword>
<keyword id="KW-0227">DNA damage</keyword>
<keyword id="KW-0233">DNA recombination</keyword>
<keyword id="KW-0234">DNA repair</keyword>
<keyword id="KW-0238">DNA-binding</keyword>
<keyword id="KW-0547">Nucleotide-binding</keyword>
<keyword id="KW-1185">Reference proteome</keyword>
<keyword id="KW-0742">SOS response</keyword>
<protein>
    <recommendedName>
        <fullName evidence="1">Protein RecA</fullName>
    </recommendedName>
    <alternativeName>
        <fullName evidence="1">Recombinase A</fullName>
    </alternativeName>
</protein>
<accession>P14582</accession>
<accession>B1XNZ3</accession>
<name>RECA_PICP2</name>
<proteinExistence type="inferred from homology"/>
<feature type="chain" id="PRO_0000122874" description="Protein RecA">
    <location>
        <begin position="1"/>
        <end position="348"/>
    </location>
</feature>
<feature type="binding site" evidence="1">
    <location>
        <begin position="69"/>
        <end position="76"/>
    </location>
    <ligand>
        <name>ATP</name>
        <dbReference type="ChEBI" id="CHEBI:30616"/>
    </ligand>
</feature>
<feature type="sequence conflict" description="In Ref. 3; AAA27363." evidence="2" ref="3">
    <original>L</original>
    <variation>I</variation>
    <location>
        <position position="198"/>
    </location>
</feature>
<feature type="sequence conflict" description="In Ref. 3; AAA27363." evidence="2" ref="3">
    <original>SEGEFG</original>
    <variation>AKGIC</variation>
    <location>
        <begin position="238"/>
        <end position="243"/>
    </location>
</feature>
<feature type="sequence conflict" description="In Ref. 3; AAA27363." evidence="2" ref="3">
    <original>LAEQTGVIT</original>
    <variation>SRNKQCHYA</variation>
    <location>
        <begin position="281"/>
        <end position="289"/>
    </location>
</feature>
<comment type="function">
    <text>Can catalyze the hydrolysis of ATP in the presence of single-stranded DNA, the ATP-dependent uptake of single-stranded DNA by duplex DNA, and the ATP-dependent hybridization of homologous single-stranded DNAs. It interacts with LexA causing its activation and leading to its autocatalytic cleavage.</text>
</comment>
<comment type="subcellular location">
    <subcellularLocation>
        <location evidence="1">Cytoplasm</location>
    </subcellularLocation>
</comment>
<comment type="similarity">
    <text evidence="1">Belongs to the RecA family.</text>
</comment>
<dbReference type="EMBL" id="M29495">
    <property type="protein sequence ID" value="AAA88636.1"/>
    <property type="molecule type" value="Genomic_DNA"/>
</dbReference>
<dbReference type="EMBL" id="CP000951">
    <property type="protein sequence ID" value="ACA98436.1"/>
    <property type="molecule type" value="Genomic_DNA"/>
</dbReference>
<dbReference type="EMBL" id="M16491">
    <property type="protein sequence ID" value="AAA27363.1"/>
    <property type="molecule type" value="Genomic_DNA"/>
</dbReference>
<dbReference type="PIR" id="A35120">
    <property type="entry name" value="RQYCA"/>
</dbReference>
<dbReference type="RefSeq" id="WP_012306060.1">
    <property type="nucleotide sequence ID" value="NZ_JAHHPU010000001.1"/>
</dbReference>
<dbReference type="SMR" id="P14582"/>
<dbReference type="STRING" id="32049.SYNPCC7002_A0426"/>
<dbReference type="KEGG" id="syp:SYNPCC7002_A0426"/>
<dbReference type="eggNOG" id="COG0468">
    <property type="taxonomic scope" value="Bacteria"/>
</dbReference>
<dbReference type="HOGENOM" id="CLU_040469_3_2_3"/>
<dbReference type="Proteomes" id="UP000001688">
    <property type="component" value="Chromosome"/>
</dbReference>
<dbReference type="GO" id="GO:0005829">
    <property type="term" value="C:cytosol"/>
    <property type="evidence" value="ECO:0007669"/>
    <property type="project" value="TreeGrafter"/>
</dbReference>
<dbReference type="GO" id="GO:0005524">
    <property type="term" value="F:ATP binding"/>
    <property type="evidence" value="ECO:0007669"/>
    <property type="project" value="UniProtKB-UniRule"/>
</dbReference>
<dbReference type="GO" id="GO:0016887">
    <property type="term" value="F:ATP hydrolysis activity"/>
    <property type="evidence" value="ECO:0007669"/>
    <property type="project" value="InterPro"/>
</dbReference>
<dbReference type="GO" id="GO:0140664">
    <property type="term" value="F:ATP-dependent DNA damage sensor activity"/>
    <property type="evidence" value="ECO:0007669"/>
    <property type="project" value="InterPro"/>
</dbReference>
<dbReference type="GO" id="GO:0003684">
    <property type="term" value="F:damaged DNA binding"/>
    <property type="evidence" value="ECO:0007669"/>
    <property type="project" value="UniProtKB-UniRule"/>
</dbReference>
<dbReference type="GO" id="GO:0003697">
    <property type="term" value="F:single-stranded DNA binding"/>
    <property type="evidence" value="ECO:0007669"/>
    <property type="project" value="UniProtKB-UniRule"/>
</dbReference>
<dbReference type="GO" id="GO:0006310">
    <property type="term" value="P:DNA recombination"/>
    <property type="evidence" value="ECO:0000316"/>
    <property type="project" value="CACAO"/>
</dbReference>
<dbReference type="GO" id="GO:0006281">
    <property type="term" value="P:DNA repair"/>
    <property type="evidence" value="ECO:0007669"/>
    <property type="project" value="UniProtKB-UniRule"/>
</dbReference>
<dbReference type="GO" id="GO:0009432">
    <property type="term" value="P:SOS response"/>
    <property type="evidence" value="ECO:0007669"/>
    <property type="project" value="UniProtKB-UniRule"/>
</dbReference>
<dbReference type="CDD" id="cd00983">
    <property type="entry name" value="RecA"/>
    <property type="match status" value="1"/>
</dbReference>
<dbReference type="FunFam" id="3.40.50.300:FF:000087">
    <property type="entry name" value="Recombinase RecA"/>
    <property type="match status" value="1"/>
</dbReference>
<dbReference type="Gene3D" id="3.40.50.300">
    <property type="entry name" value="P-loop containing nucleotide triphosphate hydrolases"/>
    <property type="match status" value="1"/>
</dbReference>
<dbReference type="HAMAP" id="MF_00268">
    <property type="entry name" value="RecA"/>
    <property type="match status" value="1"/>
</dbReference>
<dbReference type="InterPro" id="IPR003593">
    <property type="entry name" value="AAA+_ATPase"/>
</dbReference>
<dbReference type="InterPro" id="IPR013765">
    <property type="entry name" value="DNA_recomb/repair_RecA"/>
</dbReference>
<dbReference type="InterPro" id="IPR020584">
    <property type="entry name" value="DNA_recomb/repair_RecA_CS"/>
</dbReference>
<dbReference type="InterPro" id="IPR027417">
    <property type="entry name" value="P-loop_NTPase"/>
</dbReference>
<dbReference type="InterPro" id="IPR049261">
    <property type="entry name" value="RecA-like_C"/>
</dbReference>
<dbReference type="InterPro" id="IPR049428">
    <property type="entry name" value="RecA-like_N"/>
</dbReference>
<dbReference type="InterPro" id="IPR020588">
    <property type="entry name" value="RecA_ATP-bd"/>
</dbReference>
<dbReference type="InterPro" id="IPR023400">
    <property type="entry name" value="RecA_C_sf"/>
</dbReference>
<dbReference type="InterPro" id="IPR020587">
    <property type="entry name" value="RecA_monomer-monomer_interface"/>
</dbReference>
<dbReference type="NCBIfam" id="TIGR02012">
    <property type="entry name" value="tigrfam_recA"/>
    <property type="match status" value="1"/>
</dbReference>
<dbReference type="PANTHER" id="PTHR45900:SF1">
    <property type="entry name" value="MITOCHONDRIAL DNA REPAIR PROTEIN RECA HOMOLOG-RELATED"/>
    <property type="match status" value="1"/>
</dbReference>
<dbReference type="PANTHER" id="PTHR45900">
    <property type="entry name" value="RECA"/>
    <property type="match status" value="1"/>
</dbReference>
<dbReference type="Pfam" id="PF00154">
    <property type="entry name" value="RecA"/>
    <property type="match status" value="1"/>
</dbReference>
<dbReference type="Pfam" id="PF21096">
    <property type="entry name" value="RecA_C"/>
    <property type="match status" value="1"/>
</dbReference>
<dbReference type="PRINTS" id="PR00142">
    <property type="entry name" value="RECA"/>
</dbReference>
<dbReference type="SMART" id="SM00382">
    <property type="entry name" value="AAA"/>
    <property type="match status" value="1"/>
</dbReference>
<dbReference type="SUPFAM" id="SSF52540">
    <property type="entry name" value="P-loop containing nucleoside triphosphate hydrolases"/>
    <property type="match status" value="1"/>
</dbReference>
<dbReference type="SUPFAM" id="SSF54752">
    <property type="entry name" value="RecA protein, C-terminal domain"/>
    <property type="match status" value="1"/>
</dbReference>
<dbReference type="PROSITE" id="PS00321">
    <property type="entry name" value="RECA_1"/>
    <property type="match status" value="1"/>
</dbReference>
<dbReference type="PROSITE" id="PS50162">
    <property type="entry name" value="RECA_2"/>
    <property type="match status" value="1"/>
</dbReference>
<dbReference type="PROSITE" id="PS50163">
    <property type="entry name" value="RECA_3"/>
    <property type="match status" value="1"/>
</dbReference>
<organism>
    <name type="scientific">Picosynechococcus sp. (strain ATCC 27264 / PCC 7002 / PR-6)</name>
    <name type="common">Agmenellum quadruplicatum</name>
    <dbReference type="NCBI Taxonomy" id="32049"/>
    <lineage>
        <taxon>Bacteria</taxon>
        <taxon>Bacillati</taxon>
        <taxon>Cyanobacteriota</taxon>
        <taxon>Cyanophyceae</taxon>
        <taxon>Oscillatoriophycideae</taxon>
        <taxon>Chroococcales</taxon>
        <taxon>Geminocystaceae</taxon>
        <taxon>Picosynechococcus</taxon>
    </lineage>
</organism>